<dbReference type="EC" id="2.8.1.4" evidence="1"/>
<dbReference type="EMBL" id="AL766850">
    <property type="protein sequence ID" value="CAD47101.1"/>
    <property type="molecule type" value="Genomic_DNA"/>
</dbReference>
<dbReference type="RefSeq" id="WP_001200110.1">
    <property type="nucleotide sequence ID" value="NC_004368.1"/>
</dbReference>
<dbReference type="SMR" id="Q8E4F9"/>
<dbReference type="KEGG" id="san:gbs1442"/>
<dbReference type="eggNOG" id="COG0301">
    <property type="taxonomic scope" value="Bacteria"/>
</dbReference>
<dbReference type="HOGENOM" id="CLU_037952_4_0_9"/>
<dbReference type="UniPathway" id="UPA00060"/>
<dbReference type="Proteomes" id="UP000000823">
    <property type="component" value="Chromosome"/>
</dbReference>
<dbReference type="GO" id="GO:0005829">
    <property type="term" value="C:cytosol"/>
    <property type="evidence" value="ECO:0007669"/>
    <property type="project" value="TreeGrafter"/>
</dbReference>
<dbReference type="GO" id="GO:0005524">
    <property type="term" value="F:ATP binding"/>
    <property type="evidence" value="ECO:0007669"/>
    <property type="project" value="UniProtKB-UniRule"/>
</dbReference>
<dbReference type="GO" id="GO:0004810">
    <property type="term" value="F:CCA tRNA nucleotidyltransferase activity"/>
    <property type="evidence" value="ECO:0007669"/>
    <property type="project" value="InterPro"/>
</dbReference>
<dbReference type="GO" id="GO:0000049">
    <property type="term" value="F:tRNA binding"/>
    <property type="evidence" value="ECO:0007669"/>
    <property type="project" value="UniProtKB-UniRule"/>
</dbReference>
<dbReference type="GO" id="GO:0140741">
    <property type="term" value="F:tRNA-uracil-4 sulfurtransferase activity"/>
    <property type="evidence" value="ECO:0007669"/>
    <property type="project" value="UniProtKB-EC"/>
</dbReference>
<dbReference type="GO" id="GO:0009228">
    <property type="term" value="P:thiamine biosynthetic process"/>
    <property type="evidence" value="ECO:0007669"/>
    <property type="project" value="UniProtKB-KW"/>
</dbReference>
<dbReference type="GO" id="GO:0009229">
    <property type="term" value="P:thiamine diphosphate biosynthetic process"/>
    <property type="evidence" value="ECO:0007669"/>
    <property type="project" value="UniProtKB-UniRule"/>
</dbReference>
<dbReference type="GO" id="GO:0052837">
    <property type="term" value="P:thiazole biosynthetic process"/>
    <property type="evidence" value="ECO:0007669"/>
    <property type="project" value="TreeGrafter"/>
</dbReference>
<dbReference type="GO" id="GO:0002937">
    <property type="term" value="P:tRNA 4-thiouridine biosynthesis"/>
    <property type="evidence" value="ECO:0007669"/>
    <property type="project" value="TreeGrafter"/>
</dbReference>
<dbReference type="CDD" id="cd01712">
    <property type="entry name" value="PPase_ThiI"/>
    <property type="match status" value="1"/>
</dbReference>
<dbReference type="CDD" id="cd11716">
    <property type="entry name" value="THUMP_ThiI"/>
    <property type="match status" value="1"/>
</dbReference>
<dbReference type="FunFam" id="3.40.50.620:FF:000053">
    <property type="entry name" value="Probable tRNA sulfurtransferase"/>
    <property type="match status" value="1"/>
</dbReference>
<dbReference type="Gene3D" id="3.30.2130.30">
    <property type="match status" value="1"/>
</dbReference>
<dbReference type="Gene3D" id="3.40.50.620">
    <property type="entry name" value="HUPs"/>
    <property type="match status" value="1"/>
</dbReference>
<dbReference type="HAMAP" id="MF_00021">
    <property type="entry name" value="ThiI"/>
    <property type="match status" value="1"/>
</dbReference>
<dbReference type="InterPro" id="IPR014729">
    <property type="entry name" value="Rossmann-like_a/b/a_fold"/>
</dbReference>
<dbReference type="InterPro" id="IPR020536">
    <property type="entry name" value="ThiI_AANH"/>
</dbReference>
<dbReference type="InterPro" id="IPR054173">
    <property type="entry name" value="ThiI_fer"/>
</dbReference>
<dbReference type="InterPro" id="IPR049961">
    <property type="entry name" value="ThiI_N"/>
</dbReference>
<dbReference type="InterPro" id="IPR004114">
    <property type="entry name" value="THUMP_dom"/>
</dbReference>
<dbReference type="InterPro" id="IPR049962">
    <property type="entry name" value="THUMP_ThiI"/>
</dbReference>
<dbReference type="InterPro" id="IPR003720">
    <property type="entry name" value="tRNA_STrfase"/>
</dbReference>
<dbReference type="InterPro" id="IPR050102">
    <property type="entry name" value="tRNA_sulfurtransferase_ThiI"/>
</dbReference>
<dbReference type="NCBIfam" id="TIGR00342">
    <property type="entry name" value="tRNA uracil 4-sulfurtransferase ThiI"/>
    <property type="match status" value="1"/>
</dbReference>
<dbReference type="PANTHER" id="PTHR43209">
    <property type="entry name" value="TRNA SULFURTRANSFERASE"/>
    <property type="match status" value="1"/>
</dbReference>
<dbReference type="PANTHER" id="PTHR43209:SF1">
    <property type="entry name" value="TRNA SULFURTRANSFERASE"/>
    <property type="match status" value="1"/>
</dbReference>
<dbReference type="Pfam" id="PF02568">
    <property type="entry name" value="ThiI"/>
    <property type="match status" value="1"/>
</dbReference>
<dbReference type="Pfam" id="PF22025">
    <property type="entry name" value="ThiI_fer"/>
    <property type="match status" value="1"/>
</dbReference>
<dbReference type="Pfam" id="PF02926">
    <property type="entry name" value="THUMP"/>
    <property type="match status" value="1"/>
</dbReference>
<dbReference type="SMART" id="SM00981">
    <property type="entry name" value="THUMP"/>
    <property type="match status" value="1"/>
</dbReference>
<dbReference type="SUPFAM" id="SSF52402">
    <property type="entry name" value="Adenine nucleotide alpha hydrolases-like"/>
    <property type="match status" value="1"/>
</dbReference>
<dbReference type="SUPFAM" id="SSF143437">
    <property type="entry name" value="THUMP domain-like"/>
    <property type="match status" value="1"/>
</dbReference>
<dbReference type="PROSITE" id="PS51165">
    <property type="entry name" value="THUMP"/>
    <property type="match status" value="1"/>
</dbReference>
<gene>
    <name evidence="1" type="primary">thiI</name>
    <name type="ordered locus">gbs1442</name>
</gene>
<organism>
    <name type="scientific">Streptococcus agalactiae serotype III (strain NEM316)</name>
    <dbReference type="NCBI Taxonomy" id="211110"/>
    <lineage>
        <taxon>Bacteria</taxon>
        <taxon>Bacillati</taxon>
        <taxon>Bacillota</taxon>
        <taxon>Bacilli</taxon>
        <taxon>Lactobacillales</taxon>
        <taxon>Streptococcaceae</taxon>
        <taxon>Streptococcus</taxon>
    </lineage>
</organism>
<sequence>MQYSEIMIRYGELSTKKKNRMRFINKLKNNMEHVLSIYPDVSVKTDRDRGHVYLNGTDYHEVAESLKEIFGIQAFSPSFKVEKNVDTLVKAVQEIMTSVYKDGMTFKITAKRSDHSFELDSRALNHTLGDAVFSVLPNIKAQMKQPDINLKVEIRDEAAYISYENIRGAGGLPVGTSGKGMLMLSGGIDSPVAGYLALKRGVDIEAVHFASPPYTSPGALKKAHDLTRKLTKFGGNIQFIEVPFTEIQEEIKEKAPEAYLMTLTRRFMMRITDRIRENRNGLVIINGESLGQVASQTLESMQAINAVTATPIIRPVVTMDKLEIIDIAQKIDTFDISIQPFEDCCTIFAPDRPKTNPKIKNTEQYEKRMDVEGLVERAVAGIMVTTIQPQADSDDVDDLIDDLL</sequence>
<name>THII_STRA3</name>
<protein>
    <recommendedName>
        <fullName evidence="1">Probable tRNA sulfurtransferase</fullName>
        <ecNumber evidence="1">2.8.1.4</ecNumber>
    </recommendedName>
    <alternativeName>
        <fullName evidence="1">Sulfur carrier protein ThiS sulfurtransferase</fullName>
    </alternativeName>
    <alternativeName>
        <fullName evidence="1">Thiamine biosynthesis protein ThiI</fullName>
    </alternativeName>
    <alternativeName>
        <fullName evidence="1">tRNA 4-thiouridine synthase</fullName>
    </alternativeName>
</protein>
<accession>Q8E4F9</accession>
<reference key="1">
    <citation type="journal article" date="2002" name="Mol. Microbiol.">
        <title>Genome sequence of Streptococcus agalactiae, a pathogen causing invasive neonatal disease.</title>
        <authorList>
            <person name="Glaser P."/>
            <person name="Rusniok C."/>
            <person name="Buchrieser C."/>
            <person name="Chevalier F."/>
            <person name="Frangeul L."/>
            <person name="Msadek T."/>
            <person name="Zouine M."/>
            <person name="Couve E."/>
            <person name="Lalioui L."/>
            <person name="Poyart C."/>
            <person name="Trieu-Cuot P."/>
            <person name="Kunst F."/>
        </authorList>
    </citation>
    <scope>NUCLEOTIDE SEQUENCE [LARGE SCALE GENOMIC DNA]</scope>
    <source>
        <strain>NEM316</strain>
    </source>
</reference>
<proteinExistence type="inferred from homology"/>
<keyword id="KW-0067">ATP-binding</keyword>
<keyword id="KW-0963">Cytoplasm</keyword>
<keyword id="KW-0547">Nucleotide-binding</keyword>
<keyword id="KW-0694">RNA-binding</keyword>
<keyword id="KW-0784">Thiamine biosynthesis</keyword>
<keyword id="KW-0808">Transferase</keyword>
<keyword id="KW-0820">tRNA-binding</keyword>
<comment type="function">
    <text evidence="1">Catalyzes the ATP-dependent transfer of a sulfur to tRNA to produce 4-thiouridine in position 8 of tRNAs, which functions as a near-UV photosensor. Also catalyzes the transfer of sulfur to the sulfur carrier protein ThiS, forming ThiS-thiocarboxylate. This is a step in the synthesis of thiazole, in the thiamine biosynthesis pathway. The sulfur is donated as persulfide by IscS.</text>
</comment>
<comment type="catalytic activity">
    <reaction evidence="1">
        <text>[ThiI sulfur-carrier protein]-S-sulfanyl-L-cysteine + a uridine in tRNA + 2 reduced [2Fe-2S]-[ferredoxin] + ATP + H(+) = [ThiI sulfur-carrier protein]-L-cysteine + a 4-thiouridine in tRNA + 2 oxidized [2Fe-2S]-[ferredoxin] + AMP + diphosphate</text>
        <dbReference type="Rhea" id="RHEA:24176"/>
        <dbReference type="Rhea" id="RHEA-COMP:10000"/>
        <dbReference type="Rhea" id="RHEA-COMP:10001"/>
        <dbReference type="Rhea" id="RHEA-COMP:13337"/>
        <dbReference type="Rhea" id="RHEA-COMP:13338"/>
        <dbReference type="Rhea" id="RHEA-COMP:13339"/>
        <dbReference type="Rhea" id="RHEA-COMP:13340"/>
        <dbReference type="ChEBI" id="CHEBI:15378"/>
        <dbReference type="ChEBI" id="CHEBI:29950"/>
        <dbReference type="ChEBI" id="CHEBI:30616"/>
        <dbReference type="ChEBI" id="CHEBI:33019"/>
        <dbReference type="ChEBI" id="CHEBI:33737"/>
        <dbReference type="ChEBI" id="CHEBI:33738"/>
        <dbReference type="ChEBI" id="CHEBI:61963"/>
        <dbReference type="ChEBI" id="CHEBI:65315"/>
        <dbReference type="ChEBI" id="CHEBI:136798"/>
        <dbReference type="ChEBI" id="CHEBI:456215"/>
        <dbReference type="EC" id="2.8.1.4"/>
    </reaction>
</comment>
<comment type="catalytic activity">
    <reaction evidence="1">
        <text>[ThiS sulfur-carrier protein]-C-terminal Gly-Gly-AMP + S-sulfanyl-L-cysteinyl-[cysteine desulfurase] + AH2 = [ThiS sulfur-carrier protein]-C-terminal-Gly-aminoethanethioate + L-cysteinyl-[cysteine desulfurase] + A + AMP + 2 H(+)</text>
        <dbReference type="Rhea" id="RHEA:43340"/>
        <dbReference type="Rhea" id="RHEA-COMP:12157"/>
        <dbReference type="Rhea" id="RHEA-COMP:12158"/>
        <dbReference type="Rhea" id="RHEA-COMP:12910"/>
        <dbReference type="Rhea" id="RHEA-COMP:19908"/>
        <dbReference type="ChEBI" id="CHEBI:13193"/>
        <dbReference type="ChEBI" id="CHEBI:15378"/>
        <dbReference type="ChEBI" id="CHEBI:17499"/>
        <dbReference type="ChEBI" id="CHEBI:29950"/>
        <dbReference type="ChEBI" id="CHEBI:61963"/>
        <dbReference type="ChEBI" id="CHEBI:90618"/>
        <dbReference type="ChEBI" id="CHEBI:232372"/>
        <dbReference type="ChEBI" id="CHEBI:456215"/>
    </reaction>
</comment>
<comment type="pathway">
    <text evidence="1">Cofactor biosynthesis; thiamine diphosphate biosynthesis.</text>
</comment>
<comment type="subcellular location">
    <subcellularLocation>
        <location evidence="1">Cytoplasm</location>
    </subcellularLocation>
</comment>
<comment type="similarity">
    <text evidence="1">Belongs to the ThiI family.</text>
</comment>
<feature type="chain" id="PRO_0000154871" description="Probable tRNA sulfurtransferase">
    <location>
        <begin position="1"/>
        <end position="404"/>
    </location>
</feature>
<feature type="domain" description="THUMP" evidence="1">
    <location>
        <begin position="60"/>
        <end position="165"/>
    </location>
</feature>
<feature type="binding site" evidence="1">
    <location>
        <begin position="183"/>
        <end position="184"/>
    </location>
    <ligand>
        <name>ATP</name>
        <dbReference type="ChEBI" id="CHEBI:30616"/>
    </ligand>
</feature>
<feature type="binding site" evidence="1">
    <location>
        <begin position="208"/>
        <end position="209"/>
    </location>
    <ligand>
        <name>ATP</name>
        <dbReference type="ChEBI" id="CHEBI:30616"/>
    </ligand>
</feature>
<feature type="binding site" evidence="1">
    <location>
        <position position="265"/>
    </location>
    <ligand>
        <name>ATP</name>
        <dbReference type="ChEBI" id="CHEBI:30616"/>
    </ligand>
</feature>
<feature type="binding site" evidence="1">
    <location>
        <position position="287"/>
    </location>
    <ligand>
        <name>ATP</name>
        <dbReference type="ChEBI" id="CHEBI:30616"/>
    </ligand>
</feature>
<feature type="binding site" evidence="1">
    <location>
        <position position="296"/>
    </location>
    <ligand>
        <name>ATP</name>
        <dbReference type="ChEBI" id="CHEBI:30616"/>
    </ligand>
</feature>
<evidence type="ECO:0000255" key="1">
    <source>
        <dbReference type="HAMAP-Rule" id="MF_00021"/>
    </source>
</evidence>